<accession>Q7NXJ1</accession>
<proteinExistence type="inferred from homology"/>
<sequence length="262" mass="28104">MKITVNTLHKLAEEGRKITMLTCYDASFASLLDEAGVEILLVGDSLGPVMQGVDSTLPVSEEDMLYHIRCVARGAKNALILGDMTFGAYQESPQQAFAHAARLLQAGAHMVKLEGGAYMAETTRFLVERGIPVCSHIGLTPQYVNMFGGYRVQGRGEDAQRILNDAKVLAEAGASLVLMECVPAPLAKEITETVKAPTIGIGAGADTSGQVLVLHDMLGVYPGKKAKFVKNFMEEAGSIQGAVQAYIKAVKDKTFPAEEHTY</sequence>
<keyword id="KW-0963">Cytoplasm</keyword>
<keyword id="KW-0460">Magnesium</keyword>
<keyword id="KW-0479">Metal-binding</keyword>
<keyword id="KW-0566">Pantothenate biosynthesis</keyword>
<keyword id="KW-1185">Reference proteome</keyword>
<keyword id="KW-0808">Transferase</keyword>
<protein>
    <recommendedName>
        <fullName evidence="1">3-methyl-2-oxobutanoate hydroxymethyltransferase</fullName>
        <ecNumber evidence="1">2.1.2.11</ecNumber>
    </recommendedName>
    <alternativeName>
        <fullName evidence="1">Ketopantoate hydroxymethyltransferase</fullName>
        <shortName evidence="1">KPHMT</shortName>
    </alternativeName>
</protein>
<comment type="function">
    <text evidence="1">Catalyzes the reversible reaction in which hydroxymethyl group from 5,10-methylenetetrahydrofolate is transferred onto alpha-ketoisovalerate to form ketopantoate.</text>
</comment>
<comment type="catalytic activity">
    <reaction evidence="1">
        <text>3-methyl-2-oxobutanoate + (6R)-5,10-methylene-5,6,7,8-tetrahydrofolate + H2O = 2-dehydropantoate + (6S)-5,6,7,8-tetrahydrofolate</text>
        <dbReference type="Rhea" id="RHEA:11824"/>
        <dbReference type="ChEBI" id="CHEBI:11561"/>
        <dbReference type="ChEBI" id="CHEBI:11851"/>
        <dbReference type="ChEBI" id="CHEBI:15377"/>
        <dbReference type="ChEBI" id="CHEBI:15636"/>
        <dbReference type="ChEBI" id="CHEBI:57453"/>
        <dbReference type="EC" id="2.1.2.11"/>
    </reaction>
</comment>
<comment type="cofactor">
    <cofactor evidence="1">
        <name>Mg(2+)</name>
        <dbReference type="ChEBI" id="CHEBI:18420"/>
    </cofactor>
    <text evidence="1">Binds 1 Mg(2+) ion per subunit.</text>
</comment>
<comment type="pathway">
    <text evidence="1">Cofactor biosynthesis; (R)-pantothenate biosynthesis; (R)-pantoate from 3-methyl-2-oxobutanoate: step 1/2.</text>
</comment>
<comment type="subunit">
    <text evidence="1">Homodecamer; pentamer of dimers.</text>
</comment>
<comment type="subcellular location">
    <subcellularLocation>
        <location evidence="1">Cytoplasm</location>
    </subcellularLocation>
</comment>
<comment type="similarity">
    <text evidence="1">Belongs to the PanB family.</text>
</comment>
<evidence type="ECO:0000255" key="1">
    <source>
        <dbReference type="HAMAP-Rule" id="MF_00156"/>
    </source>
</evidence>
<reference key="1">
    <citation type="journal article" date="2003" name="Proc. Natl. Acad. Sci. U.S.A.">
        <title>The complete genome sequence of Chromobacterium violaceum reveals remarkable and exploitable bacterial adaptability.</title>
        <authorList>
            <person name="Vasconcelos A.T.R."/>
            <person name="de Almeida D.F."/>
            <person name="Hungria M."/>
            <person name="Guimaraes C.T."/>
            <person name="Antonio R.V."/>
            <person name="Almeida F.C."/>
            <person name="de Almeida L.G.P."/>
            <person name="de Almeida R."/>
            <person name="Alves-Gomes J.A."/>
            <person name="Andrade E.M."/>
            <person name="Araripe J."/>
            <person name="de Araujo M.F.F."/>
            <person name="Astolfi-Filho S."/>
            <person name="Azevedo V."/>
            <person name="Baptista A.J."/>
            <person name="Bataus L.A.M."/>
            <person name="Batista J.S."/>
            <person name="Belo A."/>
            <person name="van den Berg C."/>
            <person name="Bogo M."/>
            <person name="Bonatto S."/>
            <person name="Bordignon J."/>
            <person name="Brigido M.M."/>
            <person name="Brito C.A."/>
            <person name="Brocchi M."/>
            <person name="Burity H.A."/>
            <person name="Camargo A.A."/>
            <person name="Cardoso D.D.P."/>
            <person name="Carneiro N.P."/>
            <person name="Carraro D.M."/>
            <person name="Carvalho C.M.B."/>
            <person name="Cascardo J.C.M."/>
            <person name="Cavada B.S."/>
            <person name="Chueire L.M.O."/>
            <person name="Creczynski-Pasa T.B."/>
            <person name="Cunha-Junior N.C."/>
            <person name="Fagundes N."/>
            <person name="Falcao C.L."/>
            <person name="Fantinatti F."/>
            <person name="Farias I.P."/>
            <person name="Felipe M.S.S."/>
            <person name="Ferrari L.P."/>
            <person name="Ferro J.A."/>
            <person name="Ferro M.I.T."/>
            <person name="Franco G.R."/>
            <person name="Freitas N.S.A."/>
            <person name="Furlan L.R."/>
            <person name="Gazzinelli R.T."/>
            <person name="Gomes E.A."/>
            <person name="Goncalves P.R."/>
            <person name="Grangeiro T.B."/>
            <person name="Grattapaglia D."/>
            <person name="Grisard E.C."/>
            <person name="Hanna E.S."/>
            <person name="Jardim S.N."/>
            <person name="Laurino J."/>
            <person name="Leoi L.C.T."/>
            <person name="Lima L.F.A."/>
            <person name="Loureiro M.F."/>
            <person name="Lyra M.C.C.P."/>
            <person name="Madeira H.M.F."/>
            <person name="Manfio G.P."/>
            <person name="Maranhao A.Q."/>
            <person name="Martins W.S."/>
            <person name="di Mauro S.M.Z."/>
            <person name="de Medeiros S.R.B."/>
            <person name="Meissner R.V."/>
            <person name="Moreira M.A.M."/>
            <person name="Nascimento F.F."/>
            <person name="Nicolas M.F."/>
            <person name="Oliveira J.G."/>
            <person name="Oliveira S.C."/>
            <person name="Paixao R.F.C."/>
            <person name="Parente J.A."/>
            <person name="Pedrosa F.O."/>
            <person name="Pena S.D.J."/>
            <person name="Pereira J.O."/>
            <person name="Pereira M."/>
            <person name="Pinto L.S.R.C."/>
            <person name="Pinto L.S."/>
            <person name="Porto J.I.R."/>
            <person name="Potrich D.P."/>
            <person name="Ramalho-Neto C.E."/>
            <person name="Reis A.M.M."/>
            <person name="Rigo L.U."/>
            <person name="Rondinelli E."/>
            <person name="Santos E.B.P."/>
            <person name="Santos F.R."/>
            <person name="Schneider M.P.C."/>
            <person name="Seuanez H.N."/>
            <person name="Silva A.M.R."/>
            <person name="da Silva A.L.C."/>
            <person name="Silva D.W."/>
            <person name="Silva R."/>
            <person name="Simoes I.C."/>
            <person name="Simon D."/>
            <person name="Soares C.M.A."/>
            <person name="Soares R.B.A."/>
            <person name="Souza E.M."/>
            <person name="Souza K.R.L."/>
            <person name="Souza R.C."/>
            <person name="Steffens M.B.R."/>
            <person name="Steindel M."/>
            <person name="Teixeira S.R."/>
            <person name="Urmenyi T."/>
            <person name="Vettore A."/>
            <person name="Wassem R."/>
            <person name="Zaha A."/>
            <person name="Simpson A.J.G."/>
        </authorList>
    </citation>
    <scope>NUCLEOTIDE SEQUENCE [LARGE SCALE GENOMIC DNA]</scope>
    <source>
        <strain>ATCC 12472 / DSM 30191 / JCM 1249 / CCUG 213 / NBRC 12614 / NCIMB 9131 / NCTC 9757 / MK</strain>
    </source>
</reference>
<name>PANB_CHRVO</name>
<organism>
    <name type="scientific">Chromobacterium violaceum (strain ATCC 12472 / DSM 30191 / JCM 1249 / CCUG 213 / NBRC 12614 / NCIMB 9131 / NCTC 9757 / MK)</name>
    <dbReference type="NCBI Taxonomy" id="243365"/>
    <lineage>
        <taxon>Bacteria</taxon>
        <taxon>Pseudomonadati</taxon>
        <taxon>Pseudomonadota</taxon>
        <taxon>Betaproteobacteria</taxon>
        <taxon>Neisseriales</taxon>
        <taxon>Chromobacteriaceae</taxon>
        <taxon>Chromobacterium</taxon>
    </lineage>
</organism>
<feature type="chain" id="PRO_0000184835" description="3-methyl-2-oxobutanoate hydroxymethyltransferase">
    <location>
        <begin position="1"/>
        <end position="262"/>
    </location>
</feature>
<feature type="active site" description="Proton acceptor" evidence="1">
    <location>
        <position position="180"/>
    </location>
</feature>
<feature type="binding site" evidence="1">
    <location>
        <begin position="44"/>
        <end position="45"/>
    </location>
    <ligand>
        <name>3-methyl-2-oxobutanoate</name>
        <dbReference type="ChEBI" id="CHEBI:11851"/>
    </ligand>
</feature>
<feature type="binding site" evidence="1">
    <location>
        <position position="44"/>
    </location>
    <ligand>
        <name>Mg(2+)</name>
        <dbReference type="ChEBI" id="CHEBI:18420"/>
    </ligand>
</feature>
<feature type="binding site" evidence="1">
    <location>
        <position position="83"/>
    </location>
    <ligand>
        <name>3-methyl-2-oxobutanoate</name>
        <dbReference type="ChEBI" id="CHEBI:11851"/>
    </ligand>
</feature>
<feature type="binding site" evidence="1">
    <location>
        <position position="83"/>
    </location>
    <ligand>
        <name>Mg(2+)</name>
        <dbReference type="ChEBI" id="CHEBI:18420"/>
    </ligand>
</feature>
<feature type="binding site" evidence="1">
    <location>
        <position position="112"/>
    </location>
    <ligand>
        <name>3-methyl-2-oxobutanoate</name>
        <dbReference type="ChEBI" id="CHEBI:11851"/>
    </ligand>
</feature>
<feature type="binding site" evidence="1">
    <location>
        <position position="114"/>
    </location>
    <ligand>
        <name>Mg(2+)</name>
        <dbReference type="ChEBI" id="CHEBI:18420"/>
    </ligand>
</feature>
<dbReference type="EC" id="2.1.2.11" evidence="1"/>
<dbReference type="EMBL" id="AE016825">
    <property type="protein sequence ID" value="AAQ59311.1"/>
    <property type="molecule type" value="Genomic_DNA"/>
</dbReference>
<dbReference type="RefSeq" id="WP_011135187.1">
    <property type="nucleotide sequence ID" value="NC_005085.1"/>
</dbReference>
<dbReference type="SMR" id="Q7NXJ1"/>
<dbReference type="STRING" id="243365.CV_1635"/>
<dbReference type="KEGG" id="cvi:CV_1635"/>
<dbReference type="eggNOG" id="COG0413">
    <property type="taxonomic scope" value="Bacteria"/>
</dbReference>
<dbReference type="HOGENOM" id="CLU_036645_1_0_4"/>
<dbReference type="OrthoDB" id="9781789at2"/>
<dbReference type="UniPathway" id="UPA00028">
    <property type="reaction ID" value="UER00003"/>
</dbReference>
<dbReference type="Proteomes" id="UP000001424">
    <property type="component" value="Chromosome"/>
</dbReference>
<dbReference type="GO" id="GO:0005737">
    <property type="term" value="C:cytoplasm"/>
    <property type="evidence" value="ECO:0007669"/>
    <property type="project" value="UniProtKB-SubCell"/>
</dbReference>
<dbReference type="GO" id="GO:0003864">
    <property type="term" value="F:3-methyl-2-oxobutanoate hydroxymethyltransferase activity"/>
    <property type="evidence" value="ECO:0007669"/>
    <property type="project" value="UniProtKB-UniRule"/>
</dbReference>
<dbReference type="GO" id="GO:0000287">
    <property type="term" value="F:magnesium ion binding"/>
    <property type="evidence" value="ECO:0007669"/>
    <property type="project" value="TreeGrafter"/>
</dbReference>
<dbReference type="GO" id="GO:0015940">
    <property type="term" value="P:pantothenate biosynthetic process"/>
    <property type="evidence" value="ECO:0007669"/>
    <property type="project" value="UniProtKB-UniRule"/>
</dbReference>
<dbReference type="CDD" id="cd06557">
    <property type="entry name" value="KPHMT-like"/>
    <property type="match status" value="1"/>
</dbReference>
<dbReference type="FunFam" id="3.20.20.60:FF:000003">
    <property type="entry name" value="3-methyl-2-oxobutanoate hydroxymethyltransferase"/>
    <property type="match status" value="1"/>
</dbReference>
<dbReference type="Gene3D" id="3.20.20.60">
    <property type="entry name" value="Phosphoenolpyruvate-binding domains"/>
    <property type="match status" value="1"/>
</dbReference>
<dbReference type="HAMAP" id="MF_00156">
    <property type="entry name" value="PanB"/>
    <property type="match status" value="1"/>
</dbReference>
<dbReference type="InterPro" id="IPR003700">
    <property type="entry name" value="Pantoate_hydroxy_MeTrfase"/>
</dbReference>
<dbReference type="InterPro" id="IPR015813">
    <property type="entry name" value="Pyrv/PenolPyrv_kinase-like_dom"/>
</dbReference>
<dbReference type="InterPro" id="IPR040442">
    <property type="entry name" value="Pyrv_kinase-like_dom_sf"/>
</dbReference>
<dbReference type="NCBIfam" id="TIGR00222">
    <property type="entry name" value="panB"/>
    <property type="match status" value="1"/>
</dbReference>
<dbReference type="NCBIfam" id="NF001452">
    <property type="entry name" value="PRK00311.1"/>
    <property type="match status" value="1"/>
</dbReference>
<dbReference type="PANTHER" id="PTHR20881">
    <property type="entry name" value="3-METHYL-2-OXOBUTANOATE HYDROXYMETHYLTRANSFERASE"/>
    <property type="match status" value="1"/>
</dbReference>
<dbReference type="PANTHER" id="PTHR20881:SF0">
    <property type="entry name" value="3-METHYL-2-OXOBUTANOATE HYDROXYMETHYLTRANSFERASE"/>
    <property type="match status" value="1"/>
</dbReference>
<dbReference type="Pfam" id="PF02548">
    <property type="entry name" value="Pantoate_transf"/>
    <property type="match status" value="1"/>
</dbReference>
<dbReference type="PIRSF" id="PIRSF000388">
    <property type="entry name" value="Pantoate_hydroxy_MeTrfase"/>
    <property type="match status" value="1"/>
</dbReference>
<dbReference type="SUPFAM" id="SSF51621">
    <property type="entry name" value="Phosphoenolpyruvate/pyruvate domain"/>
    <property type="match status" value="1"/>
</dbReference>
<gene>
    <name evidence="1" type="primary">panB</name>
    <name type="ordered locus">CV_1635</name>
</gene>